<name>FAEC_EMENI</name>
<feature type="signal peptide" evidence="1">
    <location>
        <begin position="1"/>
        <end position="21"/>
    </location>
</feature>
<feature type="chain" id="PRO_0000394942" description="Feruloyl esterase C">
    <location>
        <begin position="22"/>
        <end position="270"/>
    </location>
</feature>
<sequence length="270" mass="27977">MLRAVLLPTLLAFGAFTPVHGANSPGCGKQPTLTNGVNQINGREYVLKIPDGYDPSKPHHLIFGLHWRGGNMYNVVNGDSIQPWYGLEARAQGSAIFVAPNGLNAGWANTNGEDVAFIDAIMEQVEDDLCVDQASRFATGFSWGGGMSYALACARAAEFRAVSVLSGGLISGCDGGNDPIAYLGIHGINDPVLPLDGGVTLANTFVSNNGCQPTDIGQPASGSGGSVRTDFSGCSHPVSFIAYDGGHDGAPLGVGSSLAPDATWEFFMAA</sequence>
<accession>Q5B2G3</accession>
<accession>C8VH20</accession>
<gene>
    <name type="primary">faeC</name>
    <name type="ORF">AN5267</name>
</gene>
<dbReference type="EC" id="3.1.1.73"/>
<dbReference type="EMBL" id="AACD01000093">
    <property type="protein sequence ID" value="EAA62427.1"/>
    <property type="molecule type" value="Genomic_DNA"/>
</dbReference>
<dbReference type="EMBL" id="BN001305">
    <property type="protein sequence ID" value="CBF82209.1"/>
    <property type="molecule type" value="Genomic_DNA"/>
</dbReference>
<dbReference type="RefSeq" id="XP_662871.1">
    <property type="nucleotide sequence ID" value="XM_657779.1"/>
</dbReference>
<dbReference type="SMR" id="Q5B2G3"/>
<dbReference type="STRING" id="227321.Q5B2G3"/>
<dbReference type="ESTHER" id="emeni-faec">
    <property type="family name" value="FaeC"/>
</dbReference>
<dbReference type="EnsemblFungi" id="CBF82209">
    <property type="protein sequence ID" value="CBF82209"/>
    <property type="gene ID" value="ANIA_05267"/>
</dbReference>
<dbReference type="KEGG" id="ani:ANIA_05267"/>
<dbReference type="VEuPathDB" id="FungiDB:AN5267"/>
<dbReference type="eggNOG" id="ENOG502QU71">
    <property type="taxonomic scope" value="Eukaryota"/>
</dbReference>
<dbReference type="HOGENOM" id="CLU_027551_2_0_1"/>
<dbReference type="InParanoid" id="Q5B2G3"/>
<dbReference type="OMA" id="IHGINDG"/>
<dbReference type="OrthoDB" id="424610at2759"/>
<dbReference type="BRENDA" id="3.1.1.73">
    <property type="organism ID" value="517"/>
</dbReference>
<dbReference type="Proteomes" id="UP000000560">
    <property type="component" value="Chromosome V"/>
</dbReference>
<dbReference type="GO" id="GO:0005576">
    <property type="term" value="C:extracellular region"/>
    <property type="evidence" value="ECO:0007669"/>
    <property type="project" value="UniProtKB-SubCell"/>
</dbReference>
<dbReference type="GO" id="GO:0030600">
    <property type="term" value="F:feruloyl esterase activity"/>
    <property type="evidence" value="ECO:0000314"/>
    <property type="project" value="UniProtKB"/>
</dbReference>
<dbReference type="GO" id="GO:0045493">
    <property type="term" value="P:xylan catabolic process"/>
    <property type="evidence" value="ECO:0000314"/>
    <property type="project" value="UniProtKB"/>
</dbReference>
<dbReference type="Gene3D" id="3.40.50.1820">
    <property type="entry name" value="alpha/beta hydrolase"/>
    <property type="match status" value="1"/>
</dbReference>
<dbReference type="InterPro" id="IPR029058">
    <property type="entry name" value="AB_hydrolase_fold"/>
</dbReference>
<dbReference type="InterPro" id="IPR043595">
    <property type="entry name" value="FaeB/C/D"/>
</dbReference>
<dbReference type="PANTHER" id="PTHR38050">
    <property type="match status" value="1"/>
</dbReference>
<dbReference type="PANTHER" id="PTHR38050:SF1">
    <property type="entry name" value="FERULOYL ESTERASE C"/>
    <property type="match status" value="1"/>
</dbReference>
<dbReference type="SUPFAM" id="SSF53474">
    <property type="entry name" value="alpha/beta-Hydrolases"/>
    <property type="match status" value="1"/>
</dbReference>
<organism>
    <name type="scientific">Emericella nidulans (strain FGSC A4 / ATCC 38163 / CBS 112.46 / NRRL 194 / M139)</name>
    <name type="common">Aspergillus nidulans</name>
    <dbReference type="NCBI Taxonomy" id="227321"/>
    <lineage>
        <taxon>Eukaryota</taxon>
        <taxon>Fungi</taxon>
        <taxon>Dikarya</taxon>
        <taxon>Ascomycota</taxon>
        <taxon>Pezizomycotina</taxon>
        <taxon>Eurotiomycetes</taxon>
        <taxon>Eurotiomycetidae</taxon>
        <taxon>Eurotiales</taxon>
        <taxon>Aspergillaceae</taxon>
        <taxon>Aspergillus</taxon>
        <taxon>Aspergillus subgen. Nidulantes</taxon>
    </lineage>
</organism>
<keyword id="KW-0119">Carbohydrate metabolism</keyword>
<keyword id="KW-0378">Hydrolase</keyword>
<keyword id="KW-0624">Polysaccharide degradation</keyword>
<keyword id="KW-1185">Reference proteome</keyword>
<keyword id="KW-0964">Secreted</keyword>
<keyword id="KW-0719">Serine esterase</keyword>
<keyword id="KW-0732">Signal</keyword>
<keyword id="KW-0858">Xylan degradation</keyword>
<evidence type="ECO:0000255" key="1"/>
<evidence type="ECO:0000269" key="2">
    <source>
    </source>
</evidence>
<evidence type="ECO:0000269" key="3">
    <source>
    </source>
</evidence>
<evidence type="ECO:0000305" key="4"/>
<comment type="function">
    <text evidence="2">Involved in degradation of plant cell walls. Hydrolyzes the feruloyl-arabinose ester bond in arabinoxylans, and the feruloyl-galactose ester bond in pectin. Active against paranitrophenyl-acetate, methyl ferulate and wheat arabinoxylan.</text>
</comment>
<comment type="catalytic activity">
    <reaction evidence="2">
        <text>feruloyl-polysaccharide + H2O = ferulate + polysaccharide.</text>
        <dbReference type="EC" id="3.1.1.73"/>
    </reaction>
</comment>
<comment type="biophysicochemical properties">
    <phDependence>
        <text evidence="2">Optimum pH is 6.1.</text>
    </phDependence>
    <temperatureDependence>
        <text evidence="2">Optimum temperature is 37 degrees Celsius.</text>
    </temperatureDependence>
</comment>
<comment type="subcellular location">
    <subcellularLocation>
        <location evidence="4">Secreted</location>
    </subcellularLocation>
</comment>
<comment type="induction">
    <text evidence="3">Induced during growth on suberin.</text>
</comment>
<comment type="similarity">
    <text evidence="4">Belongs to the faeC family.</text>
</comment>
<reference key="1">
    <citation type="journal article" date="2005" name="Nature">
        <title>Sequencing of Aspergillus nidulans and comparative analysis with A. fumigatus and A. oryzae.</title>
        <authorList>
            <person name="Galagan J.E."/>
            <person name="Calvo S.E."/>
            <person name="Cuomo C."/>
            <person name="Ma L.-J."/>
            <person name="Wortman J.R."/>
            <person name="Batzoglou S."/>
            <person name="Lee S.-I."/>
            <person name="Bastuerkmen M."/>
            <person name="Spevak C.C."/>
            <person name="Clutterbuck J."/>
            <person name="Kapitonov V."/>
            <person name="Jurka J."/>
            <person name="Scazzocchio C."/>
            <person name="Farman M.L."/>
            <person name="Butler J."/>
            <person name="Purcell S."/>
            <person name="Harris S."/>
            <person name="Braus G.H."/>
            <person name="Draht O."/>
            <person name="Busch S."/>
            <person name="D'Enfert C."/>
            <person name="Bouchier C."/>
            <person name="Goldman G.H."/>
            <person name="Bell-Pedersen D."/>
            <person name="Griffiths-Jones S."/>
            <person name="Doonan J.H."/>
            <person name="Yu J."/>
            <person name="Vienken K."/>
            <person name="Pain A."/>
            <person name="Freitag M."/>
            <person name="Selker E.U."/>
            <person name="Archer D.B."/>
            <person name="Penalva M.A."/>
            <person name="Oakley B.R."/>
            <person name="Momany M."/>
            <person name="Tanaka T."/>
            <person name="Kumagai T."/>
            <person name="Asai K."/>
            <person name="Machida M."/>
            <person name="Nierman W.C."/>
            <person name="Denning D.W."/>
            <person name="Caddick M.X."/>
            <person name="Hynes M."/>
            <person name="Paoletti M."/>
            <person name="Fischer R."/>
            <person name="Miller B.L."/>
            <person name="Dyer P.S."/>
            <person name="Sachs M.S."/>
            <person name="Osmani S.A."/>
            <person name="Birren B.W."/>
        </authorList>
    </citation>
    <scope>NUCLEOTIDE SEQUENCE [LARGE SCALE GENOMIC DNA]</scope>
    <source>
        <strain>FGSC A4 / ATCC 38163 / CBS 112.46 / NRRL 194 / M139</strain>
    </source>
</reference>
<reference key="2">
    <citation type="journal article" date="2009" name="Fungal Genet. Biol.">
        <title>The 2008 update of the Aspergillus nidulans genome annotation: a community effort.</title>
        <authorList>
            <person name="Wortman J.R."/>
            <person name="Gilsenan J.M."/>
            <person name="Joardar V."/>
            <person name="Deegan J."/>
            <person name="Clutterbuck J."/>
            <person name="Andersen M.R."/>
            <person name="Archer D."/>
            <person name="Bencina M."/>
            <person name="Braus G."/>
            <person name="Coutinho P."/>
            <person name="von Dohren H."/>
            <person name="Doonan J."/>
            <person name="Driessen A.J."/>
            <person name="Durek P."/>
            <person name="Espeso E."/>
            <person name="Fekete E."/>
            <person name="Flipphi M."/>
            <person name="Estrada C.G."/>
            <person name="Geysens S."/>
            <person name="Goldman G."/>
            <person name="de Groot P.W."/>
            <person name="Hansen K."/>
            <person name="Harris S.D."/>
            <person name="Heinekamp T."/>
            <person name="Helmstaedt K."/>
            <person name="Henrissat B."/>
            <person name="Hofmann G."/>
            <person name="Homan T."/>
            <person name="Horio T."/>
            <person name="Horiuchi H."/>
            <person name="James S."/>
            <person name="Jones M."/>
            <person name="Karaffa L."/>
            <person name="Karanyi Z."/>
            <person name="Kato M."/>
            <person name="Keller N."/>
            <person name="Kelly D.E."/>
            <person name="Kiel J.A."/>
            <person name="Kim J.M."/>
            <person name="van der Klei I.J."/>
            <person name="Klis F.M."/>
            <person name="Kovalchuk A."/>
            <person name="Krasevec N."/>
            <person name="Kubicek C.P."/>
            <person name="Liu B."/>
            <person name="Maccabe A."/>
            <person name="Meyer V."/>
            <person name="Mirabito P."/>
            <person name="Miskei M."/>
            <person name="Mos M."/>
            <person name="Mullins J."/>
            <person name="Nelson D.R."/>
            <person name="Nielsen J."/>
            <person name="Oakley B.R."/>
            <person name="Osmani S.A."/>
            <person name="Pakula T."/>
            <person name="Paszewski A."/>
            <person name="Paulsen I."/>
            <person name="Pilsyk S."/>
            <person name="Pocsi I."/>
            <person name="Punt P.J."/>
            <person name="Ram A.F."/>
            <person name="Ren Q."/>
            <person name="Robellet X."/>
            <person name="Robson G."/>
            <person name="Seiboth B."/>
            <person name="van Solingen P."/>
            <person name="Specht T."/>
            <person name="Sun J."/>
            <person name="Taheri-Talesh N."/>
            <person name="Takeshita N."/>
            <person name="Ussery D."/>
            <person name="vanKuyk P.A."/>
            <person name="Visser H."/>
            <person name="van de Vondervoort P.J."/>
            <person name="de Vries R.P."/>
            <person name="Walton J."/>
            <person name="Xiang X."/>
            <person name="Xiong Y."/>
            <person name="Zeng A.P."/>
            <person name="Brandt B.W."/>
            <person name="Cornell M.J."/>
            <person name="van den Hondel C.A."/>
            <person name="Visser J."/>
            <person name="Oliver S.G."/>
            <person name="Turner G."/>
        </authorList>
    </citation>
    <scope>GENOME REANNOTATION</scope>
    <source>
        <strain>FGSC A4 / ATCC 38163 / CBS 112.46 / NRRL 194 / M139</strain>
    </source>
</reference>
<reference key="3">
    <citation type="journal article" date="2006" name="Proc. Natl. Acad. Sci. U.S.A.">
        <title>Development and application of a suite of polysaccharide-degrading enzymes for analyzing plant cell walls.</title>
        <authorList>
            <person name="Bauer S."/>
            <person name="Vasu P."/>
            <person name="Persson S."/>
            <person name="Mort A.J."/>
            <person name="Somerville C.R."/>
        </authorList>
    </citation>
    <scope>FUNCTION</scope>
    <scope>CATALYTIC ACTIVITY</scope>
    <scope>BIOPHYSICOCHEMICAL PROPERTIES</scope>
</reference>
<reference key="4">
    <citation type="journal article" date="2014" name="BMC Genomics">
        <title>Elucidating how the saprophytic fungus Aspergillus nidulans uses the plant polyester suberin as carbon source.</title>
        <authorList>
            <person name="Martins I."/>
            <person name="Hartmann D.O."/>
            <person name="Alves P.C."/>
            <person name="Martins C."/>
            <person name="Garcia H."/>
            <person name="Leclercq C.C."/>
            <person name="Ferreira R."/>
            <person name="He J."/>
            <person name="Renaut J."/>
            <person name="Becker J.D."/>
            <person name="Silva Pereira C."/>
        </authorList>
    </citation>
    <scope>INDUCTION</scope>
</reference>
<protein>
    <recommendedName>
        <fullName>Feruloyl esterase C</fullName>
        <ecNumber>3.1.1.73</ecNumber>
    </recommendedName>
    <alternativeName>
        <fullName>Ferulic acid esterase C</fullName>
        <shortName>FAEC</shortName>
    </alternativeName>
</protein>
<proteinExistence type="evidence at protein level"/>